<name>SPEA_BACSU</name>
<organism>
    <name type="scientific">Bacillus subtilis (strain 168)</name>
    <dbReference type="NCBI Taxonomy" id="224308"/>
    <lineage>
        <taxon>Bacteria</taxon>
        <taxon>Bacillati</taxon>
        <taxon>Bacillota</taxon>
        <taxon>Bacilli</taxon>
        <taxon>Bacillales</taxon>
        <taxon>Bacillaceae</taxon>
        <taxon>Bacillus</taxon>
    </lineage>
</organism>
<proteinExistence type="evidence at protein level"/>
<evidence type="ECO:0000250" key="1"/>
<evidence type="ECO:0000305" key="2"/>
<comment type="function">
    <text>Catalyzes the formation of agmatine from arginine.</text>
</comment>
<comment type="catalytic activity">
    <reaction>
        <text>L-arginine + H(+) = agmatine + CO2</text>
        <dbReference type="Rhea" id="RHEA:17641"/>
        <dbReference type="ChEBI" id="CHEBI:15378"/>
        <dbReference type="ChEBI" id="CHEBI:16526"/>
        <dbReference type="ChEBI" id="CHEBI:32682"/>
        <dbReference type="ChEBI" id="CHEBI:58145"/>
        <dbReference type="EC" id="4.1.1.19"/>
    </reaction>
</comment>
<comment type="cofactor">
    <cofactor>
        <name>pyridoxal 5'-phosphate</name>
        <dbReference type="ChEBI" id="CHEBI:597326"/>
    </cofactor>
</comment>
<comment type="pathway">
    <text>Amine and polyamine biosynthesis; agmatine biosynthesis; agmatine from L-arginine: step 1/1.</text>
</comment>
<comment type="subcellular location">
    <subcellularLocation>
        <location evidence="2">Cytoplasm</location>
    </subcellularLocation>
</comment>
<comment type="similarity">
    <text evidence="2">Belongs to the Orn/Lys/Arg decarboxylase class-I family.</text>
</comment>
<comment type="caution">
    <text evidence="2">Was originally (Ref.1) thought to be a lysine decarboxylase and was consequently named cad.</text>
</comment>
<keyword id="KW-0963">Cytoplasm</keyword>
<keyword id="KW-0210">Decarboxylase</keyword>
<keyword id="KW-0456">Lyase</keyword>
<keyword id="KW-0620">Polyamine biosynthesis</keyword>
<keyword id="KW-0661">Putrescine biosynthesis</keyword>
<keyword id="KW-0663">Pyridoxal phosphate</keyword>
<keyword id="KW-1185">Reference proteome</keyword>
<keyword id="KW-0745">Spermidine biosynthesis</keyword>
<protein>
    <recommendedName>
        <fullName>Arginine decarboxylase</fullName>
        <ecNumber>4.1.1.19</ecNumber>
    </recommendedName>
</protein>
<reference key="1">
    <citation type="submission" date="1991-03" db="EMBL/GenBank/DDBJ databases">
        <title>Cloning and sequencing the lysine decarboxylase of Bacillus subtilis.</title>
        <authorList>
            <person name="Hemilae H."/>
            <person name="Koivula T."/>
            <person name="Paulin L."/>
        </authorList>
    </citation>
    <scope>NUCLEOTIDE SEQUENCE [GENOMIC DNA]</scope>
    <source>
        <strain>168</strain>
    </source>
</reference>
<reference key="2">
    <citation type="journal article" date="1996" name="Microbiology">
        <title>The ampS-nprE (124 degrees-127 degrees) region of the Bacillus subtilis 168 chromosome: sequencing of a 27 kb segment and identification of several genes in the area.</title>
        <authorList>
            <person name="Winters P."/>
            <person name="Caldwell R.M."/>
            <person name="Enfield L."/>
            <person name="Ferrari E."/>
        </authorList>
    </citation>
    <scope>NUCLEOTIDE SEQUENCE [GENOMIC DNA]</scope>
    <source>
        <strain>168</strain>
    </source>
</reference>
<reference key="3">
    <citation type="journal article" date="1997" name="Nature">
        <title>The complete genome sequence of the Gram-positive bacterium Bacillus subtilis.</title>
        <authorList>
            <person name="Kunst F."/>
            <person name="Ogasawara N."/>
            <person name="Moszer I."/>
            <person name="Albertini A.M."/>
            <person name="Alloni G."/>
            <person name="Azevedo V."/>
            <person name="Bertero M.G."/>
            <person name="Bessieres P."/>
            <person name="Bolotin A."/>
            <person name="Borchert S."/>
            <person name="Borriss R."/>
            <person name="Boursier L."/>
            <person name="Brans A."/>
            <person name="Braun M."/>
            <person name="Brignell S.C."/>
            <person name="Bron S."/>
            <person name="Brouillet S."/>
            <person name="Bruschi C.V."/>
            <person name="Caldwell B."/>
            <person name="Capuano V."/>
            <person name="Carter N.M."/>
            <person name="Choi S.-K."/>
            <person name="Codani J.-J."/>
            <person name="Connerton I.F."/>
            <person name="Cummings N.J."/>
            <person name="Daniel R.A."/>
            <person name="Denizot F."/>
            <person name="Devine K.M."/>
            <person name="Duesterhoeft A."/>
            <person name="Ehrlich S.D."/>
            <person name="Emmerson P.T."/>
            <person name="Entian K.-D."/>
            <person name="Errington J."/>
            <person name="Fabret C."/>
            <person name="Ferrari E."/>
            <person name="Foulger D."/>
            <person name="Fritz C."/>
            <person name="Fujita M."/>
            <person name="Fujita Y."/>
            <person name="Fuma S."/>
            <person name="Galizzi A."/>
            <person name="Galleron N."/>
            <person name="Ghim S.-Y."/>
            <person name="Glaser P."/>
            <person name="Goffeau A."/>
            <person name="Golightly E.J."/>
            <person name="Grandi G."/>
            <person name="Guiseppi G."/>
            <person name="Guy B.J."/>
            <person name="Haga K."/>
            <person name="Haiech J."/>
            <person name="Harwood C.R."/>
            <person name="Henaut A."/>
            <person name="Hilbert H."/>
            <person name="Holsappel S."/>
            <person name="Hosono S."/>
            <person name="Hullo M.-F."/>
            <person name="Itaya M."/>
            <person name="Jones L.-M."/>
            <person name="Joris B."/>
            <person name="Karamata D."/>
            <person name="Kasahara Y."/>
            <person name="Klaerr-Blanchard M."/>
            <person name="Klein C."/>
            <person name="Kobayashi Y."/>
            <person name="Koetter P."/>
            <person name="Koningstein G."/>
            <person name="Krogh S."/>
            <person name="Kumano M."/>
            <person name="Kurita K."/>
            <person name="Lapidus A."/>
            <person name="Lardinois S."/>
            <person name="Lauber J."/>
            <person name="Lazarevic V."/>
            <person name="Lee S.-M."/>
            <person name="Levine A."/>
            <person name="Liu H."/>
            <person name="Masuda S."/>
            <person name="Mauel C."/>
            <person name="Medigue C."/>
            <person name="Medina N."/>
            <person name="Mellado R.P."/>
            <person name="Mizuno M."/>
            <person name="Moestl D."/>
            <person name="Nakai S."/>
            <person name="Noback M."/>
            <person name="Noone D."/>
            <person name="O'Reilly M."/>
            <person name="Ogawa K."/>
            <person name="Ogiwara A."/>
            <person name="Oudega B."/>
            <person name="Park S.-H."/>
            <person name="Parro V."/>
            <person name="Pohl T.M."/>
            <person name="Portetelle D."/>
            <person name="Porwollik S."/>
            <person name="Prescott A.M."/>
            <person name="Presecan E."/>
            <person name="Pujic P."/>
            <person name="Purnelle B."/>
            <person name="Rapoport G."/>
            <person name="Rey M."/>
            <person name="Reynolds S."/>
            <person name="Rieger M."/>
            <person name="Rivolta C."/>
            <person name="Rocha E."/>
            <person name="Roche B."/>
            <person name="Rose M."/>
            <person name="Sadaie Y."/>
            <person name="Sato T."/>
            <person name="Scanlan E."/>
            <person name="Schleich S."/>
            <person name="Schroeter R."/>
            <person name="Scoffone F."/>
            <person name="Sekiguchi J."/>
            <person name="Sekowska A."/>
            <person name="Seror S.J."/>
            <person name="Serror P."/>
            <person name="Shin B.-S."/>
            <person name="Soldo B."/>
            <person name="Sorokin A."/>
            <person name="Tacconi E."/>
            <person name="Takagi T."/>
            <person name="Takahashi H."/>
            <person name="Takemaru K."/>
            <person name="Takeuchi M."/>
            <person name="Tamakoshi A."/>
            <person name="Tanaka T."/>
            <person name="Terpstra P."/>
            <person name="Tognoni A."/>
            <person name="Tosato V."/>
            <person name="Uchiyama S."/>
            <person name="Vandenbol M."/>
            <person name="Vannier F."/>
            <person name="Vassarotti A."/>
            <person name="Viari A."/>
            <person name="Wambutt R."/>
            <person name="Wedler E."/>
            <person name="Wedler H."/>
            <person name="Weitzenegger T."/>
            <person name="Winters P."/>
            <person name="Wipat A."/>
            <person name="Yamamoto H."/>
            <person name="Yamane K."/>
            <person name="Yasumoto K."/>
            <person name="Yata K."/>
            <person name="Yoshida K."/>
            <person name="Yoshikawa H.-F."/>
            <person name="Zumstein E."/>
            <person name="Yoshikawa H."/>
            <person name="Danchin A."/>
        </authorList>
    </citation>
    <scope>NUCLEOTIDE SEQUENCE [LARGE SCALE GENOMIC DNA]</scope>
    <source>
        <strain>168</strain>
    </source>
</reference>
<reference key="4">
    <citation type="journal article" date="1990" name="J. Bacteriol.">
        <title>Secretory S complex of Bacillus subtilis: sequence analysis and identity to pyruvate dehydrogenase.</title>
        <authorList>
            <person name="Hemilae H.O."/>
            <person name="Palva A."/>
            <person name="Paulin L."/>
            <person name="Arvidson S."/>
            <person name="Palva I."/>
        </authorList>
    </citation>
    <scope>NUCLEOTIDE SEQUENCE [GENOMIC DNA] OF 34-490</scope>
    <source>
        <strain>168</strain>
    </source>
</reference>
<reference key="5">
    <citation type="journal article" date="1991" name="FEMS Microbiol. Lett.">
        <title>Sequence of a PAL-related lipoprotein from Bacillus subtilis.</title>
        <authorList>
            <person name="Hemilae H.O."/>
        </authorList>
    </citation>
    <scope>NUCLEOTIDE SEQUENCE [GENOMIC DNA] OF 485-490</scope>
</reference>
<reference key="6">
    <citation type="journal article" date="1998" name="Mol. Microbiol.">
        <title>Characterization of polyamine synthesis pathway in Bacillus subtilis 168.</title>
        <authorList>
            <person name="Sekowska A."/>
            <person name="Bertin P."/>
            <person name="Danchin A."/>
        </authorList>
    </citation>
    <scope>CHARACTERIZATION OF POLYAMINE PATHWAY</scope>
</reference>
<sequence length="490" mass="53583">MSQHETPLYTGLKKHASRQPVQFHIPGHKKGAGMDPEFRQFIGENALSIDLINIEPLDDLHAPKGIIKQAQDLAAEAFGADHTFFSVQGTSGAIMTMVMAVCGPGDKIIIPRNVHKSIMTAIVFSGAVPIFIHPEIDNELGISHGITLESAKRALTEHPDAKGLLVINPTYFGVAADLKSIVELAHSFDVPVLVDEAHGVHIHFHDELPLSAMQAGADIAATSVHKLGGSLTQSSILNMREGLVSKDRVQSILSMLTTTSTSYLLLASLDVARKRLATEGRQLAEETLKLANQTRDRLNQIEGIYCVGSEILGSKAAYSYDPTKLIISVKSLGLTGHDVEKWLRESFNIEVELSDLYNILCIFTPGDSQNDADRLVEALTEIAQQMSEQDVTHQQTEVLLPEIPLLAMTPRDAFYANTEVIPLKEASGRIIAEFVMVYPPGIPIFIPGEIITEENISYIFKNLDAGLPVQGPEDSTLHMIRVIKEQKAIQ</sequence>
<gene>
    <name type="primary">speA</name>
    <name type="synonym">cad</name>
    <name type="ordered locus">BSU14630</name>
</gene>
<accession>P21885</accession>
<accession>P26934</accession>
<feature type="chain" id="PRO_0000201147" description="Arginine decarboxylase">
    <location>
        <begin position="1"/>
        <end position="490"/>
    </location>
</feature>
<feature type="modified residue" description="N6-(pyridoxal phosphate)lysine" evidence="1">
    <location>
        <position position="226"/>
    </location>
</feature>
<dbReference type="EC" id="4.1.1.19"/>
<dbReference type="EMBL" id="X58433">
    <property type="protein sequence ID" value="CAA41337.1"/>
    <property type="molecule type" value="Genomic_DNA"/>
</dbReference>
<dbReference type="EMBL" id="AF012285">
    <property type="protein sequence ID" value="AAC24937.1"/>
    <property type="molecule type" value="Genomic_DNA"/>
</dbReference>
<dbReference type="EMBL" id="AL009126">
    <property type="protein sequence ID" value="CAB13336.1"/>
    <property type="molecule type" value="Genomic_DNA"/>
</dbReference>
<dbReference type="EMBL" id="M57435">
    <property type="protein sequence ID" value="AAA62686.1"/>
    <property type="molecule type" value="Genomic_DNA"/>
</dbReference>
<dbReference type="PIR" id="A54546">
    <property type="entry name" value="A54546"/>
</dbReference>
<dbReference type="RefSeq" id="NP_389346.1">
    <property type="nucleotide sequence ID" value="NC_000964.3"/>
</dbReference>
<dbReference type="RefSeq" id="WP_003244780.1">
    <property type="nucleotide sequence ID" value="NZ_OZ025638.1"/>
</dbReference>
<dbReference type="SMR" id="P21885"/>
<dbReference type="FunCoup" id="P21885">
    <property type="interactions" value="120"/>
</dbReference>
<dbReference type="STRING" id="224308.BSU14630"/>
<dbReference type="jPOST" id="P21885"/>
<dbReference type="PaxDb" id="224308-BSU14630"/>
<dbReference type="DNASU" id="936002"/>
<dbReference type="EnsemblBacteria" id="CAB13336">
    <property type="protein sequence ID" value="CAB13336"/>
    <property type="gene ID" value="BSU_14630"/>
</dbReference>
<dbReference type="GeneID" id="936002"/>
<dbReference type="KEGG" id="bsu:BSU14630"/>
<dbReference type="PATRIC" id="fig|224308.179.peg.1596"/>
<dbReference type="eggNOG" id="COG1982">
    <property type="taxonomic scope" value="Bacteria"/>
</dbReference>
<dbReference type="InParanoid" id="P21885"/>
<dbReference type="OrthoDB" id="9815233at2"/>
<dbReference type="PhylomeDB" id="P21885"/>
<dbReference type="BioCyc" id="BSUB:BSU14630-MONOMER"/>
<dbReference type="UniPathway" id="UPA00186">
    <property type="reaction ID" value="UER00284"/>
</dbReference>
<dbReference type="Proteomes" id="UP000001570">
    <property type="component" value="Chromosome"/>
</dbReference>
<dbReference type="GO" id="GO:0005737">
    <property type="term" value="C:cytoplasm"/>
    <property type="evidence" value="ECO:0007669"/>
    <property type="project" value="UniProtKB-SubCell"/>
</dbReference>
<dbReference type="GO" id="GO:0008792">
    <property type="term" value="F:arginine decarboxylase activity"/>
    <property type="evidence" value="ECO:0007669"/>
    <property type="project" value="UniProtKB-EC"/>
</dbReference>
<dbReference type="GO" id="GO:0009446">
    <property type="term" value="P:putrescine biosynthetic process"/>
    <property type="evidence" value="ECO:0007669"/>
    <property type="project" value="UniProtKB-KW"/>
</dbReference>
<dbReference type="GO" id="GO:0008295">
    <property type="term" value="P:spermidine biosynthetic process"/>
    <property type="evidence" value="ECO:0007669"/>
    <property type="project" value="UniProtKB-KW"/>
</dbReference>
<dbReference type="CDD" id="cd00615">
    <property type="entry name" value="Orn_deC_like"/>
    <property type="match status" value="1"/>
</dbReference>
<dbReference type="Gene3D" id="3.90.1150.10">
    <property type="entry name" value="Aspartate Aminotransferase, domain 1"/>
    <property type="match status" value="1"/>
</dbReference>
<dbReference type="Gene3D" id="3.90.105.10">
    <property type="entry name" value="Molybdopterin biosynthesis moea protein, domain 2"/>
    <property type="match status" value="1"/>
</dbReference>
<dbReference type="Gene3D" id="3.40.640.10">
    <property type="entry name" value="Type I PLP-dependent aspartate aminotransferase-like (Major domain)"/>
    <property type="match status" value="1"/>
</dbReference>
<dbReference type="InterPro" id="IPR000310">
    <property type="entry name" value="Orn/Lys/Arg_deCO2ase_major_dom"/>
</dbReference>
<dbReference type="InterPro" id="IPR052357">
    <property type="entry name" value="Orn_Lys_Arg_decarboxylase-I"/>
</dbReference>
<dbReference type="InterPro" id="IPR008286">
    <property type="entry name" value="Prn/Lys/Arg_de-COase_C"/>
</dbReference>
<dbReference type="InterPro" id="IPR036633">
    <property type="entry name" value="Prn/Lys/Arg_de-COase_C_sf"/>
</dbReference>
<dbReference type="InterPro" id="IPR015424">
    <property type="entry name" value="PyrdxlP-dep_Trfase"/>
</dbReference>
<dbReference type="InterPro" id="IPR015421">
    <property type="entry name" value="PyrdxlP-dep_Trfase_major"/>
</dbReference>
<dbReference type="InterPro" id="IPR015422">
    <property type="entry name" value="PyrdxlP-dep_Trfase_small"/>
</dbReference>
<dbReference type="PANTHER" id="PTHR43277">
    <property type="entry name" value="ARGININE DECARBOXYLASE"/>
    <property type="match status" value="1"/>
</dbReference>
<dbReference type="PANTHER" id="PTHR43277:SF4">
    <property type="entry name" value="ARGININE DECARBOXYLASE"/>
    <property type="match status" value="1"/>
</dbReference>
<dbReference type="Pfam" id="PF01276">
    <property type="entry name" value="OKR_DC_1"/>
    <property type="match status" value="1"/>
</dbReference>
<dbReference type="Pfam" id="PF03711">
    <property type="entry name" value="OKR_DC_1_C"/>
    <property type="match status" value="1"/>
</dbReference>
<dbReference type="SUPFAM" id="SSF55904">
    <property type="entry name" value="Ornithine decarboxylase C-terminal domain"/>
    <property type="match status" value="1"/>
</dbReference>
<dbReference type="SUPFAM" id="SSF53383">
    <property type="entry name" value="PLP-dependent transferases"/>
    <property type="match status" value="1"/>
</dbReference>
<dbReference type="PROSITE" id="PS00703">
    <property type="entry name" value="OKR_DC_1"/>
    <property type="match status" value="1"/>
</dbReference>